<dbReference type="EC" id="2.5.1.-" evidence="1"/>
<dbReference type="EMBL" id="CP000076">
    <property type="protein sequence ID" value="AAY94156.1"/>
    <property type="molecule type" value="Genomic_DNA"/>
</dbReference>
<dbReference type="RefSeq" id="WP_011063180.1">
    <property type="nucleotide sequence ID" value="NC_004129.6"/>
</dbReference>
<dbReference type="SMR" id="Q4K6X6"/>
<dbReference type="STRING" id="220664.PFL_4927"/>
<dbReference type="KEGG" id="pfl:PFL_4927"/>
<dbReference type="PATRIC" id="fig|220664.5.peg.5047"/>
<dbReference type="eggNOG" id="COG0500">
    <property type="taxonomic scope" value="Bacteria"/>
</dbReference>
<dbReference type="HOGENOM" id="CLU_052665_0_0_6"/>
<dbReference type="Proteomes" id="UP000008540">
    <property type="component" value="Chromosome"/>
</dbReference>
<dbReference type="GO" id="GO:0008168">
    <property type="term" value="F:methyltransferase activity"/>
    <property type="evidence" value="ECO:0007669"/>
    <property type="project" value="TreeGrafter"/>
</dbReference>
<dbReference type="GO" id="GO:0016765">
    <property type="term" value="F:transferase activity, transferring alkyl or aryl (other than methyl) groups"/>
    <property type="evidence" value="ECO:0007669"/>
    <property type="project" value="UniProtKB-UniRule"/>
</dbReference>
<dbReference type="GO" id="GO:0002098">
    <property type="term" value="P:tRNA wobble uridine modification"/>
    <property type="evidence" value="ECO:0007669"/>
    <property type="project" value="InterPro"/>
</dbReference>
<dbReference type="CDD" id="cd02440">
    <property type="entry name" value="AdoMet_MTases"/>
    <property type="match status" value="1"/>
</dbReference>
<dbReference type="Gene3D" id="3.40.50.150">
    <property type="entry name" value="Vaccinia Virus protein VP39"/>
    <property type="match status" value="1"/>
</dbReference>
<dbReference type="HAMAP" id="MF_01590">
    <property type="entry name" value="tRNA_carboxymethyltr_CmoB"/>
    <property type="match status" value="1"/>
</dbReference>
<dbReference type="InterPro" id="IPR010017">
    <property type="entry name" value="CmoB"/>
</dbReference>
<dbReference type="InterPro" id="IPR027555">
    <property type="entry name" value="Mo5U34_MeTrfas-like"/>
</dbReference>
<dbReference type="InterPro" id="IPR029063">
    <property type="entry name" value="SAM-dependent_MTases_sf"/>
</dbReference>
<dbReference type="NCBIfam" id="NF011650">
    <property type="entry name" value="PRK15068.1"/>
    <property type="match status" value="1"/>
</dbReference>
<dbReference type="NCBIfam" id="TIGR00452">
    <property type="entry name" value="tRNA 5-methoxyuridine(34)/uridine 5-oxyacetic acid(34) synthase CmoB"/>
    <property type="match status" value="1"/>
</dbReference>
<dbReference type="PANTHER" id="PTHR43464">
    <property type="entry name" value="METHYLTRANSFERASE"/>
    <property type="match status" value="1"/>
</dbReference>
<dbReference type="PANTHER" id="PTHR43464:SF95">
    <property type="entry name" value="TRNA U34 CARBOXYMETHYLTRANSFERASE"/>
    <property type="match status" value="1"/>
</dbReference>
<dbReference type="Pfam" id="PF08003">
    <property type="entry name" value="Methyltransf_9"/>
    <property type="match status" value="1"/>
</dbReference>
<dbReference type="SUPFAM" id="SSF53335">
    <property type="entry name" value="S-adenosyl-L-methionine-dependent methyltransferases"/>
    <property type="match status" value="1"/>
</dbReference>
<feature type="chain" id="PRO_0000313947" description="tRNA U34 carboxymethyltransferase">
    <location>
        <begin position="1"/>
        <end position="318"/>
    </location>
</feature>
<feature type="binding site" evidence="1">
    <location>
        <position position="88"/>
    </location>
    <ligand>
        <name>carboxy-S-adenosyl-L-methionine</name>
        <dbReference type="ChEBI" id="CHEBI:134278"/>
    </ligand>
</feature>
<feature type="binding site" evidence="1">
    <location>
        <position position="102"/>
    </location>
    <ligand>
        <name>carboxy-S-adenosyl-L-methionine</name>
        <dbReference type="ChEBI" id="CHEBI:134278"/>
    </ligand>
</feature>
<feature type="binding site" evidence="1">
    <location>
        <position position="107"/>
    </location>
    <ligand>
        <name>carboxy-S-adenosyl-L-methionine</name>
        <dbReference type="ChEBI" id="CHEBI:134278"/>
    </ligand>
</feature>
<feature type="binding site" evidence="1">
    <location>
        <position position="126"/>
    </location>
    <ligand>
        <name>carboxy-S-adenosyl-L-methionine</name>
        <dbReference type="ChEBI" id="CHEBI:134278"/>
    </ligand>
</feature>
<feature type="binding site" evidence="1">
    <location>
        <position position="192"/>
    </location>
    <ligand>
        <name>carboxy-S-adenosyl-L-methionine</name>
        <dbReference type="ChEBI" id="CHEBI:134278"/>
    </ligand>
</feature>
<feature type="binding site" evidence="1">
    <location>
        <position position="196"/>
    </location>
    <ligand>
        <name>carboxy-S-adenosyl-L-methionine</name>
        <dbReference type="ChEBI" id="CHEBI:134278"/>
    </ligand>
</feature>
<feature type="binding site" evidence="1">
    <location>
        <position position="311"/>
    </location>
    <ligand>
        <name>carboxy-S-adenosyl-L-methionine</name>
        <dbReference type="ChEBI" id="CHEBI:134278"/>
    </ligand>
</feature>
<reference key="1">
    <citation type="journal article" date="2005" name="Nat. Biotechnol.">
        <title>Complete genome sequence of the plant commensal Pseudomonas fluorescens Pf-5.</title>
        <authorList>
            <person name="Paulsen I.T."/>
            <person name="Press C.M."/>
            <person name="Ravel J."/>
            <person name="Kobayashi D.Y."/>
            <person name="Myers G.S.A."/>
            <person name="Mavrodi D.V."/>
            <person name="DeBoy R.T."/>
            <person name="Seshadri R."/>
            <person name="Ren Q."/>
            <person name="Madupu R."/>
            <person name="Dodson R.J."/>
            <person name="Durkin A.S."/>
            <person name="Brinkac L.M."/>
            <person name="Daugherty S.C."/>
            <person name="Sullivan S.A."/>
            <person name="Rosovitz M.J."/>
            <person name="Gwinn M.L."/>
            <person name="Zhou L."/>
            <person name="Schneider D.J."/>
            <person name="Cartinhour S.W."/>
            <person name="Nelson W.C."/>
            <person name="Weidman J."/>
            <person name="Watkins K."/>
            <person name="Tran K."/>
            <person name="Khouri H."/>
            <person name="Pierson E.A."/>
            <person name="Pierson L.S. III"/>
            <person name="Thomashow L.S."/>
            <person name="Loper J.E."/>
        </authorList>
    </citation>
    <scope>NUCLEOTIDE SEQUENCE [LARGE SCALE GENOMIC DNA]</scope>
    <source>
        <strain>ATCC BAA-477 / NRRL B-23932 / Pf-5</strain>
    </source>
</reference>
<accession>Q4K6X6</accession>
<name>CMOB_PSEF5</name>
<organism>
    <name type="scientific">Pseudomonas fluorescens (strain ATCC BAA-477 / NRRL B-23932 / Pf-5)</name>
    <dbReference type="NCBI Taxonomy" id="220664"/>
    <lineage>
        <taxon>Bacteria</taxon>
        <taxon>Pseudomonadati</taxon>
        <taxon>Pseudomonadota</taxon>
        <taxon>Gammaproteobacteria</taxon>
        <taxon>Pseudomonadales</taxon>
        <taxon>Pseudomonadaceae</taxon>
        <taxon>Pseudomonas</taxon>
    </lineage>
</organism>
<sequence>MIDLSPLARRLAGTPLATWANGLQAQLDAKMEKGHGDLERWQSALDALPKIQPSEIDLINGLRLDTDCDDATRAQMRTALMGLSPWRKGPFDLFGVHVDTEWRSDWKWSRVAPHLNLEGKRILDVGCGNGYYMWRMLGAGAHSVIGVDPNWLFFCQFQAVQRYLSEPSVWHLPFPFEDLPANLEGFDTVFSMGVFYHRRSPIEHLLALKDCLVKGGELVLETLVVEGDQHQVLVPEDRYAQMRNVWFLPSVPALELWLRRAGFSDVRCVDVSVTSIEEQRGTEWMKYQSLSDFLDPNDHSKTIEGLPAPMRAVIVAKK</sequence>
<proteinExistence type="inferred from homology"/>
<keyword id="KW-0808">Transferase</keyword>
<keyword id="KW-0819">tRNA processing</keyword>
<evidence type="ECO:0000255" key="1">
    <source>
        <dbReference type="HAMAP-Rule" id="MF_01590"/>
    </source>
</evidence>
<gene>
    <name evidence="1" type="primary">cmoB</name>
    <name type="ordered locus">PFL_4927</name>
</gene>
<comment type="function">
    <text evidence="1">Catalyzes carboxymethyl transfer from carboxy-S-adenosyl-L-methionine (Cx-SAM) to 5-hydroxyuridine (ho5U) to form 5-carboxymethoxyuridine (cmo5U) at position 34 in tRNAs.</text>
</comment>
<comment type="catalytic activity">
    <reaction evidence="1">
        <text>carboxy-S-adenosyl-L-methionine + 5-hydroxyuridine(34) in tRNA = 5-carboxymethoxyuridine(34) in tRNA + S-adenosyl-L-homocysteine + H(+)</text>
        <dbReference type="Rhea" id="RHEA:52848"/>
        <dbReference type="Rhea" id="RHEA-COMP:13381"/>
        <dbReference type="Rhea" id="RHEA-COMP:13383"/>
        <dbReference type="ChEBI" id="CHEBI:15378"/>
        <dbReference type="ChEBI" id="CHEBI:57856"/>
        <dbReference type="ChEBI" id="CHEBI:134278"/>
        <dbReference type="ChEBI" id="CHEBI:136877"/>
        <dbReference type="ChEBI" id="CHEBI:136879"/>
    </reaction>
</comment>
<comment type="subunit">
    <text evidence="1">Homotetramer.</text>
</comment>
<comment type="similarity">
    <text evidence="1">Belongs to the class I-like SAM-binding methyltransferase superfamily. CmoB family.</text>
</comment>
<protein>
    <recommendedName>
        <fullName evidence="1">tRNA U34 carboxymethyltransferase</fullName>
        <ecNumber evidence="1">2.5.1.-</ecNumber>
    </recommendedName>
</protein>